<evidence type="ECO:0000255" key="1">
    <source>
        <dbReference type="HAMAP-Rule" id="MF_00176"/>
    </source>
</evidence>
<organism>
    <name type="scientific">Staphylococcus saprophyticus subsp. saprophyticus (strain ATCC 15305 / DSM 20229 / NCIMB 8711 / NCTC 7292 / S-41)</name>
    <dbReference type="NCBI Taxonomy" id="342451"/>
    <lineage>
        <taxon>Bacteria</taxon>
        <taxon>Bacillati</taxon>
        <taxon>Bacillota</taxon>
        <taxon>Bacilli</taxon>
        <taxon>Bacillales</taxon>
        <taxon>Staphylococcaceae</taxon>
        <taxon>Staphylococcus</taxon>
    </lineage>
</organism>
<comment type="function">
    <text evidence="1">Catalyzes the attachment of serine to tRNA(Ser). Is also able to aminoacylate tRNA(Sec) with serine, to form the misacylated tRNA L-seryl-tRNA(Sec), which will be further converted into selenocysteinyl-tRNA(Sec).</text>
</comment>
<comment type="catalytic activity">
    <reaction evidence="1">
        <text>tRNA(Ser) + L-serine + ATP = L-seryl-tRNA(Ser) + AMP + diphosphate + H(+)</text>
        <dbReference type="Rhea" id="RHEA:12292"/>
        <dbReference type="Rhea" id="RHEA-COMP:9669"/>
        <dbReference type="Rhea" id="RHEA-COMP:9703"/>
        <dbReference type="ChEBI" id="CHEBI:15378"/>
        <dbReference type="ChEBI" id="CHEBI:30616"/>
        <dbReference type="ChEBI" id="CHEBI:33019"/>
        <dbReference type="ChEBI" id="CHEBI:33384"/>
        <dbReference type="ChEBI" id="CHEBI:78442"/>
        <dbReference type="ChEBI" id="CHEBI:78533"/>
        <dbReference type="ChEBI" id="CHEBI:456215"/>
        <dbReference type="EC" id="6.1.1.11"/>
    </reaction>
</comment>
<comment type="catalytic activity">
    <reaction evidence="1">
        <text>tRNA(Sec) + L-serine + ATP = L-seryl-tRNA(Sec) + AMP + diphosphate + H(+)</text>
        <dbReference type="Rhea" id="RHEA:42580"/>
        <dbReference type="Rhea" id="RHEA-COMP:9742"/>
        <dbReference type="Rhea" id="RHEA-COMP:10128"/>
        <dbReference type="ChEBI" id="CHEBI:15378"/>
        <dbReference type="ChEBI" id="CHEBI:30616"/>
        <dbReference type="ChEBI" id="CHEBI:33019"/>
        <dbReference type="ChEBI" id="CHEBI:33384"/>
        <dbReference type="ChEBI" id="CHEBI:78442"/>
        <dbReference type="ChEBI" id="CHEBI:78533"/>
        <dbReference type="ChEBI" id="CHEBI:456215"/>
        <dbReference type="EC" id="6.1.1.11"/>
    </reaction>
</comment>
<comment type="pathway">
    <text evidence="1">Aminoacyl-tRNA biosynthesis; selenocysteinyl-tRNA(Sec) biosynthesis; L-seryl-tRNA(Sec) from L-serine and tRNA(Sec): step 1/1.</text>
</comment>
<comment type="subunit">
    <text evidence="1">Homodimer. The tRNA molecule binds across the dimer.</text>
</comment>
<comment type="subcellular location">
    <subcellularLocation>
        <location evidence="1">Cytoplasm</location>
    </subcellularLocation>
</comment>
<comment type="domain">
    <text evidence="1">Consists of two distinct domains, a catalytic core and a N-terminal extension that is involved in tRNA binding.</text>
</comment>
<comment type="similarity">
    <text evidence="1">Belongs to the class-II aminoacyl-tRNA synthetase family. Type-1 seryl-tRNA synthetase subfamily.</text>
</comment>
<reference key="1">
    <citation type="journal article" date="2005" name="Proc. Natl. Acad. Sci. U.S.A.">
        <title>Whole genome sequence of Staphylococcus saprophyticus reveals the pathogenesis of uncomplicated urinary tract infection.</title>
        <authorList>
            <person name="Kuroda M."/>
            <person name="Yamashita A."/>
            <person name="Hirakawa H."/>
            <person name="Kumano M."/>
            <person name="Morikawa K."/>
            <person name="Higashide M."/>
            <person name="Maruyama A."/>
            <person name="Inose Y."/>
            <person name="Matoba K."/>
            <person name="Toh H."/>
            <person name="Kuhara S."/>
            <person name="Hattori M."/>
            <person name="Ohta T."/>
        </authorList>
    </citation>
    <scope>NUCLEOTIDE SEQUENCE [LARGE SCALE GENOMIC DNA]</scope>
    <source>
        <strain>ATCC 15305 / DSM 20229 / NCIMB 8711 / NCTC 7292 / S-41</strain>
    </source>
</reference>
<protein>
    <recommendedName>
        <fullName evidence="1">Serine--tRNA ligase</fullName>
        <ecNumber evidence="1">6.1.1.11</ecNumber>
    </recommendedName>
    <alternativeName>
        <fullName evidence="1">Seryl-tRNA synthetase</fullName>
        <shortName evidence="1">SerRS</shortName>
    </alternativeName>
    <alternativeName>
        <fullName evidence="1">Seryl-tRNA(Ser/Sec) synthetase</fullName>
    </alternativeName>
</protein>
<feature type="chain" id="PRO_1000019834" description="Serine--tRNA ligase">
    <location>
        <begin position="1"/>
        <end position="427"/>
    </location>
</feature>
<feature type="binding site" evidence="1">
    <location>
        <begin position="231"/>
        <end position="233"/>
    </location>
    <ligand>
        <name>L-serine</name>
        <dbReference type="ChEBI" id="CHEBI:33384"/>
    </ligand>
</feature>
<feature type="binding site" evidence="1">
    <location>
        <begin position="262"/>
        <end position="264"/>
    </location>
    <ligand>
        <name>ATP</name>
        <dbReference type="ChEBI" id="CHEBI:30616"/>
    </ligand>
</feature>
<feature type="binding site" evidence="1">
    <location>
        <position position="285"/>
    </location>
    <ligand>
        <name>L-serine</name>
        <dbReference type="ChEBI" id="CHEBI:33384"/>
    </ligand>
</feature>
<feature type="binding site" evidence="1">
    <location>
        <begin position="349"/>
        <end position="352"/>
    </location>
    <ligand>
        <name>ATP</name>
        <dbReference type="ChEBI" id="CHEBI:30616"/>
    </ligand>
</feature>
<feature type="binding site" evidence="1">
    <location>
        <position position="385"/>
    </location>
    <ligand>
        <name>L-serine</name>
        <dbReference type="ChEBI" id="CHEBI:33384"/>
    </ligand>
</feature>
<keyword id="KW-0030">Aminoacyl-tRNA synthetase</keyword>
<keyword id="KW-0067">ATP-binding</keyword>
<keyword id="KW-0963">Cytoplasm</keyword>
<keyword id="KW-0436">Ligase</keyword>
<keyword id="KW-0547">Nucleotide-binding</keyword>
<keyword id="KW-0648">Protein biosynthesis</keyword>
<keyword id="KW-1185">Reference proteome</keyword>
<sequence>MLDIKLFRNDPEFLKEKVAKRGMDSKVVDEVLELDEQRRQLISQAEEMKAERNKVSGEIAQKKRNKEDADDAIAAMRNLGDEIKVLDDTLNQVDVDLNDKLSRIPNIIHDDVPEGATDEDNIEVKRWGTPRTFEFEDKAHWDLVEELEMVDFERAAKVSGARFVFLTGDGAQLERALMNYMITKHTTQHGYTEMMVPQLVNADSMYGTGQLPKFEEDLFKVEKEGLYTIPTAEVPLTNYYRNEIIAPDVLPAKFTAQSACYRSEAGSAGRDTRGLIRLHQFDKVEMVRIEKPEDSWQALEDMTHHAEAILEELGLPYRRVILCTGDIGFGSSKTYDLEVWLPSYNDYKEISSCSNITDFQARRSNIRFKRDKNAKPELAHTLNGSGLAVGRTFAAIVENYQNEDGSVTIPEVLVPFMGGKTVIRPTK</sequence>
<dbReference type="EC" id="6.1.1.11" evidence="1"/>
<dbReference type="EMBL" id="AP008934">
    <property type="protein sequence ID" value="BAE17154.1"/>
    <property type="molecule type" value="Genomic_DNA"/>
</dbReference>
<dbReference type="RefSeq" id="WP_011302016.1">
    <property type="nucleotide sequence ID" value="NZ_MTGA01000035.1"/>
</dbReference>
<dbReference type="SMR" id="Q4A172"/>
<dbReference type="GeneID" id="3615464"/>
<dbReference type="KEGG" id="ssp:SSP0009"/>
<dbReference type="eggNOG" id="COG0172">
    <property type="taxonomic scope" value="Bacteria"/>
</dbReference>
<dbReference type="HOGENOM" id="CLU_023797_1_1_9"/>
<dbReference type="OrthoDB" id="9804647at2"/>
<dbReference type="UniPathway" id="UPA00906">
    <property type="reaction ID" value="UER00895"/>
</dbReference>
<dbReference type="Proteomes" id="UP000006371">
    <property type="component" value="Chromosome"/>
</dbReference>
<dbReference type="GO" id="GO:0005737">
    <property type="term" value="C:cytoplasm"/>
    <property type="evidence" value="ECO:0007669"/>
    <property type="project" value="UniProtKB-SubCell"/>
</dbReference>
<dbReference type="GO" id="GO:0005524">
    <property type="term" value="F:ATP binding"/>
    <property type="evidence" value="ECO:0007669"/>
    <property type="project" value="UniProtKB-UniRule"/>
</dbReference>
<dbReference type="GO" id="GO:0140096">
    <property type="term" value="F:catalytic activity, acting on a protein"/>
    <property type="evidence" value="ECO:0007669"/>
    <property type="project" value="UniProtKB-ARBA"/>
</dbReference>
<dbReference type="GO" id="GO:0004828">
    <property type="term" value="F:serine-tRNA ligase activity"/>
    <property type="evidence" value="ECO:0007669"/>
    <property type="project" value="UniProtKB-UniRule"/>
</dbReference>
<dbReference type="GO" id="GO:0016740">
    <property type="term" value="F:transferase activity"/>
    <property type="evidence" value="ECO:0007669"/>
    <property type="project" value="UniProtKB-ARBA"/>
</dbReference>
<dbReference type="GO" id="GO:0016260">
    <property type="term" value="P:selenocysteine biosynthetic process"/>
    <property type="evidence" value="ECO:0007669"/>
    <property type="project" value="UniProtKB-UniRule"/>
</dbReference>
<dbReference type="GO" id="GO:0006434">
    <property type="term" value="P:seryl-tRNA aminoacylation"/>
    <property type="evidence" value="ECO:0007669"/>
    <property type="project" value="UniProtKB-UniRule"/>
</dbReference>
<dbReference type="CDD" id="cd00770">
    <property type="entry name" value="SerRS_core"/>
    <property type="match status" value="1"/>
</dbReference>
<dbReference type="Gene3D" id="3.30.930.10">
    <property type="entry name" value="Bira Bifunctional Protein, Domain 2"/>
    <property type="match status" value="1"/>
</dbReference>
<dbReference type="Gene3D" id="1.10.287.40">
    <property type="entry name" value="Serine-tRNA synthetase, tRNA binding domain"/>
    <property type="match status" value="1"/>
</dbReference>
<dbReference type="HAMAP" id="MF_00176">
    <property type="entry name" value="Ser_tRNA_synth_type1"/>
    <property type="match status" value="1"/>
</dbReference>
<dbReference type="InterPro" id="IPR002314">
    <property type="entry name" value="aa-tRNA-synt_IIb"/>
</dbReference>
<dbReference type="InterPro" id="IPR006195">
    <property type="entry name" value="aa-tRNA-synth_II"/>
</dbReference>
<dbReference type="InterPro" id="IPR045864">
    <property type="entry name" value="aa-tRNA-synth_II/BPL/LPL"/>
</dbReference>
<dbReference type="InterPro" id="IPR002317">
    <property type="entry name" value="Ser-tRNA-ligase_type_1"/>
</dbReference>
<dbReference type="InterPro" id="IPR015866">
    <property type="entry name" value="Ser-tRNA-synth_1_N"/>
</dbReference>
<dbReference type="InterPro" id="IPR042103">
    <property type="entry name" value="SerRS_1_N_sf"/>
</dbReference>
<dbReference type="InterPro" id="IPR033729">
    <property type="entry name" value="SerRS_core"/>
</dbReference>
<dbReference type="InterPro" id="IPR010978">
    <property type="entry name" value="tRNA-bd_arm"/>
</dbReference>
<dbReference type="NCBIfam" id="TIGR00414">
    <property type="entry name" value="serS"/>
    <property type="match status" value="1"/>
</dbReference>
<dbReference type="PANTHER" id="PTHR43697:SF1">
    <property type="entry name" value="SERINE--TRNA LIGASE"/>
    <property type="match status" value="1"/>
</dbReference>
<dbReference type="PANTHER" id="PTHR43697">
    <property type="entry name" value="SERYL-TRNA SYNTHETASE"/>
    <property type="match status" value="1"/>
</dbReference>
<dbReference type="Pfam" id="PF02403">
    <property type="entry name" value="Seryl_tRNA_N"/>
    <property type="match status" value="1"/>
</dbReference>
<dbReference type="Pfam" id="PF00587">
    <property type="entry name" value="tRNA-synt_2b"/>
    <property type="match status" value="1"/>
</dbReference>
<dbReference type="PIRSF" id="PIRSF001529">
    <property type="entry name" value="Ser-tRNA-synth_IIa"/>
    <property type="match status" value="1"/>
</dbReference>
<dbReference type="PRINTS" id="PR00981">
    <property type="entry name" value="TRNASYNTHSER"/>
</dbReference>
<dbReference type="SUPFAM" id="SSF55681">
    <property type="entry name" value="Class II aaRS and biotin synthetases"/>
    <property type="match status" value="1"/>
</dbReference>
<dbReference type="SUPFAM" id="SSF46589">
    <property type="entry name" value="tRNA-binding arm"/>
    <property type="match status" value="1"/>
</dbReference>
<dbReference type="PROSITE" id="PS50862">
    <property type="entry name" value="AA_TRNA_LIGASE_II"/>
    <property type="match status" value="1"/>
</dbReference>
<proteinExistence type="inferred from homology"/>
<gene>
    <name evidence="1" type="primary">serS</name>
    <name type="ordered locus">SSP0009</name>
</gene>
<name>SYS_STAS1</name>
<accession>Q4A172</accession>